<gene>
    <name evidence="1" type="primary">ahcY</name>
    <name type="ordered locus">sll1234</name>
</gene>
<comment type="function">
    <text evidence="1">May play a key role in the regulation of the intracellular concentration of adenosylhomocysteine.</text>
</comment>
<comment type="catalytic activity">
    <reaction evidence="1">
        <text>S-adenosyl-L-homocysteine + H2O = L-homocysteine + adenosine</text>
        <dbReference type="Rhea" id="RHEA:21708"/>
        <dbReference type="ChEBI" id="CHEBI:15377"/>
        <dbReference type="ChEBI" id="CHEBI:16335"/>
        <dbReference type="ChEBI" id="CHEBI:57856"/>
        <dbReference type="ChEBI" id="CHEBI:58199"/>
        <dbReference type="EC" id="3.13.2.1"/>
    </reaction>
</comment>
<comment type="cofactor">
    <cofactor evidence="1">
        <name>NAD(+)</name>
        <dbReference type="ChEBI" id="CHEBI:57540"/>
    </cofactor>
    <text evidence="1">Binds 1 NAD(+) per subunit.</text>
</comment>
<comment type="pathway">
    <text evidence="1">Amino-acid biosynthesis; L-homocysteine biosynthesis; L-homocysteine from S-adenosyl-L-homocysteine: step 1/1.</text>
</comment>
<comment type="subcellular location">
    <subcellularLocation>
        <location evidence="1">Cytoplasm</location>
    </subcellularLocation>
</comment>
<comment type="similarity">
    <text evidence="1">Belongs to the adenosylhomocysteinase family.</text>
</comment>
<accession>P74008</accession>
<sequence>MVATPVKQKYDIKDISLAPQGRQRIEWAAREMPVLKQIRERFAQEKPFAGIRLVACCHVTTETANLAIALHAGGADSLLIASNPLSTQDDVAACLVADYGIPVYAIKGEDNETYHRHVQIALDHRPNIIIDDGSDVVATLVQERQHQLSDIIGTTEETTTGIVRLRAMFNDGVLTFPAMNVNDADTKHFYDNRYGTGQSTLDGIIRATNILLAGKTIVVAGYGWCGKGVAMRAKGMGADVIVTEISPVPAIEAAMDGFRVMPMAEAAHQGDIFITVTGNKHVIRPEHFAVMKDGAIVCNSGHFDIEIDLKSLKEQAKEVKEVRNFTEQYILPNGKSIIVIGEGRLVNLAAAEGHPSAVMDMSFANQALACEHLVKNKGQLEPGMHSIPVEVDQEIARLKLQAMGIAIDSLTPEQVEYINSWASGT</sequence>
<name>SAHH_SYNY3</name>
<organism>
    <name type="scientific">Synechocystis sp. (strain ATCC 27184 / PCC 6803 / Kazusa)</name>
    <dbReference type="NCBI Taxonomy" id="1111708"/>
    <lineage>
        <taxon>Bacteria</taxon>
        <taxon>Bacillati</taxon>
        <taxon>Cyanobacteriota</taxon>
        <taxon>Cyanophyceae</taxon>
        <taxon>Synechococcales</taxon>
        <taxon>Merismopediaceae</taxon>
        <taxon>Synechocystis</taxon>
    </lineage>
</organism>
<keyword id="KW-0002">3D-structure</keyword>
<keyword id="KW-0963">Cytoplasm</keyword>
<keyword id="KW-0378">Hydrolase</keyword>
<keyword id="KW-0520">NAD</keyword>
<keyword id="KW-0554">One-carbon metabolism</keyword>
<keyword id="KW-1185">Reference proteome</keyword>
<dbReference type="EC" id="3.13.2.1" evidence="1"/>
<dbReference type="EMBL" id="BA000022">
    <property type="protein sequence ID" value="BAA18079.1"/>
    <property type="molecule type" value="Genomic_DNA"/>
</dbReference>
<dbReference type="PIR" id="S75518">
    <property type="entry name" value="S75518"/>
</dbReference>
<dbReference type="PDB" id="7O5L">
    <property type="method" value="X-ray"/>
    <property type="resolution" value="1.74 A"/>
    <property type="chains" value="A/C=1-425"/>
</dbReference>
<dbReference type="PDB" id="7O5M">
    <property type="method" value="X-ray"/>
    <property type="resolution" value="2.20 A"/>
    <property type="chains" value="A/C=1-425"/>
</dbReference>
<dbReference type="PDB" id="7ZD7">
    <property type="method" value="X-ray"/>
    <property type="resolution" value="1.90 A"/>
    <property type="chains" value="A/C=1-425"/>
</dbReference>
<dbReference type="PDB" id="7ZD8">
    <property type="method" value="X-ray"/>
    <property type="resolution" value="2.03 A"/>
    <property type="chains" value="A/C=1-425"/>
</dbReference>
<dbReference type="PDB" id="7ZD9">
    <property type="method" value="X-ray"/>
    <property type="resolution" value="1.89 A"/>
    <property type="chains" value="A/C=1-425"/>
</dbReference>
<dbReference type="PDBsum" id="7O5L"/>
<dbReference type="PDBsum" id="7O5M"/>
<dbReference type="PDBsum" id="7ZD7"/>
<dbReference type="PDBsum" id="7ZD8"/>
<dbReference type="PDBsum" id="7ZD9"/>
<dbReference type="SMR" id="P74008"/>
<dbReference type="STRING" id="1148.gene:10498950"/>
<dbReference type="PaxDb" id="1148-1653163"/>
<dbReference type="EnsemblBacteria" id="BAA18079">
    <property type="protein sequence ID" value="BAA18079"/>
    <property type="gene ID" value="BAA18079"/>
</dbReference>
<dbReference type="KEGG" id="syn:sll1234"/>
<dbReference type="eggNOG" id="COG0499">
    <property type="taxonomic scope" value="Bacteria"/>
</dbReference>
<dbReference type="InParanoid" id="P74008"/>
<dbReference type="PhylomeDB" id="P74008"/>
<dbReference type="UniPathway" id="UPA00314">
    <property type="reaction ID" value="UER00076"/>
</dbReference>
<dbReference type="Proteomes" id="UP000001425">
    <property type="component" value="Chromosome"/>
</dbReference>
<dbReference type="GO" id="GO:0005829">
    <property type="term" value="C:cytosol"/>
    <property type="evidence" value="ECO:0000318"/>
    <property type="project" value="GO_Central"/>
</dbReference>
<dbReference type="GO" id="GO:0004013">
    <property type="term" value="F:adenosylhomocysteinase activity"/>
    <property type="evidence" value="ECO:0000318"/>
    <property type="project" value="GO_Central"/>
</dbReference>
<dbReference type="GO" id="GO:0071269">
    <property type="term" value="P:L-homocysteine biosynthetic process"/>
    <property type="evidence" value="ECO:0007669"/>
    <property type="project" value="UniProtKB-UniRule"/>
</dbReference>
<dbReference type="GO" id="GO:0006730">
    <property type="term" value="P:one-carbon metabolic process"/>
    <property type="evidence" value="ECO:0007669"/>
    <property type="project" value="UniProtKB-KW"/>
</dbReference>
<dbReference type="GO" id="GO:0033353">
    <property type="term" value="P:S-adenosylmethionine cycle"/>
    <property type="evidence" value="ECO:0000318"/>
    <property type="project" value="GO_Central"/>
</dbReference>
<dbReference type="CDD" id="cd00401">
    <property type="entry name" value="SAHH"/>
    <property type="match status" value="1"/>
</dbReference>
<dbReference type="FunFam" id="3.40.50.720:FF:000004">
    <property type="entry name" value="Adenosylhomocysteinase"/>
    <property type="match status" value="1"/>
</dbReference>
<dbReference type="Gene3D" id="3.40.50.1480">
    <property type="entry name" value="Adenosylhomocysteinase-like"/>
    <property type="match status" value="1"/>
</dbReference>
<dbReference type="Gene3D" id="3.40.50.720">
    <property type="entry name" value="NAD(P)-binding Rossmann-like Domain"/>
    <property type="match status" value="1"/>
</dbReference>
<dbReference type="HAMAP" id="MF_00563">
    <property type="entry name" value="AdoHcyase"/>
    <property type="match status" value="1"/>
</dbReference>
<dbReference type="InterPro" id="IPR042172">
    <property type="entry name" value="Adenosylhomocyst_ase-like_sf"/>
</dbReference>
<dbReference type="InterPro" id="IPR000043">
    <property type="entry name" value="Adenosylhomocysteinase-like"/>
</dbReference>
<dbReference type="InterPro" id="IPR015878">
    <property type="entry name" value="Ado_hCys_hydrolase_NAD-bd"/>
</dbReference>
<dbReference type="InterPro" id="IPR036291">
    <property type="entry name" value="NAD(P)-bd_dom_sf"/>
</dbReference>
<dbReference type="InterPro" id="IPR020082">
    <property type="entry name" value="S-Ado-L-homoCys_hydrolase_CS"/>
</dbReference>
<dbReference type="NCBIfam" id="TIGR00936">
    <property type="entry name" value="ahcY"/>
    <property type="match status" value="1"/>
</dbReference>
<dbReference type="NCBIfam" id="NF004005">
    <property type="entry name" value="PRK05476.2-3"/>
    <property type="match status" value="1"/>
</dbReference>
<dbReference type="PANTHER" id="PTHR23420">
    <property type="entry name" value="ADENOSYLHOMOCYSTEINASE"/>
    <property type="match status" value="1"/>
</dbReference>
<dbReference type="PANTHER" id="PTHR23420:SF0">
    <property type="entry name" value="ADENOSYLHOMOCYSTEINASE"/>
    <property type="match status" value="1"/>
</dbReference>
<dbReference type="Pfam" id="PF05221">
    <property type="entry name" value="AdoHcyase"/>
    <property type="match status" value="2"/>
</dbReference>
<dbReference type="Pfam" id="PF00670">
    <property type="entry name" value="AdoHcyase_NAD"/>
    <property type="match status" value="1"/>
</dbReference>
<dbReference type="PIRSF" id="PIRSF001109">
    <property type="entry name" value="Ad_hcy_hydrolase"/>
    <property type="match status" value="1"/>
</dbReference>
<dbReference type="SMART" id="SM00996">
    <property type="entry name" value="AdoHcyase"/>
    <property type="match status" value="1"/>
</dbReference>
<dbReference type="SMART" id="SM00997">
    <property type="entry name" value="AdoHcyase_NAD"/>
    <property type="match status" value="1"/>
</dbReference>
<dbReference type="SUPFAM" id="SSF52283">
    <property type="entry name" value="Formate/glycerate dehydrogenase catalytic domain-like"/>
    <property type="match status" value="1"/>
</dbReference>
<dbReference type="SUPFAM" id="SSF51735">
    <property type="entry name" value="NAD(P)-binding Rossmann-fold domains"/>
    <property type="match status" value="1"/>
</dbReference>
<dbReference type="PROSITE" id="PS00738">
    <property type="entry name" value="ADOHCYASE_1"/>
    <property type="match status" value="1"/>
</dbReference>
<dbReference type="PROSITE" id="PS00739">
    <property type="entry name" value="ADOHCYASE_2"/>
    <property type="match status" value="1"/>
</dbReference>
<protein>
    <recommendedName>
        <fullName evidence="1">Adenosylhomocysteinase</fullName>
        <ecNumber evidence="1">3.13.2.1</ecNumber>
    </recommendedName>
    <alternativeName>
        <fullName evidence="1">S-adenosyl-L-homocysteine hydrolase</fullName>
        <shortName evidence="1">AdoHcyase</shortName>
    </alternativeName>
</protein>
<feature type="chain" id="PRO_0000116994" description="Adenosylhomocysteinase">
    <location>
        <begin position="1"/>
        <end position="425"/>
    </location>
</feature>
<feature type="binding site" evidence="1">
    <location>
        <position position="60"/>
    </location>
    <ligand>
        <name>substrate</name>
    </ligand>
</feature>
<feature type="binding site" evidence="1">
    <location>
        <position position="132"/>
    </location>
    <ligand>
        <name>substrate</name>
    </ligand>
</feature>
<feature type="binding site" evidence="1">
    <location>
        <position position="157"/>
    </location>
    <ligand>
        <name>substrate</name>
    </ligand>
</feature>
<feature type="binding site" evidence="1">
    <location>
        <begin position="158"/>
        <end position="160"/>
    </location>
    <ligand>
        <name>NAD(+)</name>
        <dbReference type="ChEBI" id="CHEBI:57540"/>
    </ligand>
</feature>
<feature type="binding site" evidence="1">
    <location>
        <position position="187"/>
    </location>
    <ligand>
        <name>substrate</name>
    </ligand>
</feature>
<feature type="binding site" evidence="1">
    <location>
        <position position="191"/>
    </location>
    <ligand>
        <name>substrate</name>
    </ligand>
</feature>
<feature type="binding site" evidence="1">
    <location>
        <position position="192"/>
    </location>
    <ligand>
        <name>NAD(+)</name>
        <dbReference type="ChEBI" id="CHEBI:57540"/>
    </ligand>
</feature>
<feature type="binding site" evidence="1">
    <location>
        <begin position="221"/>
        <end position="226"/>
    </location>
    <ligand>
        <name>NAD(+)</name>
        <dbReference type="ChEBI" id="CHEBI:57540"/>
    </ligand>
</feature>
<feature type="binding site" evidence="1">
    <location>
        <position position="244"/>
    </location>
    <ligand>
        <name>NAD(+)</name>
        <dbReference type="ChEBI" id="CHEBI:57540"/>
    </ligand>
</feature>
<feature type="binding site" evidence="1">
    <location>
        <position position="279"/>
    </location>
    <ligand>
        <name>NAD(+)</name>
        <dbReference type="ChEBI" id="CHEBI:57540"/>
    </ligand>
</feature>
<feature type="binding site" evidence="1">
    <location>
        <begin position="300"/>
        <end position="302"/>
    </location>
    <ligand>
        <name>NAD(+)</name>
        <dbReference type="ChEBI" id="CHEBI:57540"/>
    </ligand>
</feature>
<feature type="binding site" evidence="1">
    <location>
        <position position="347"/>
    </location>
    <ligand>
        <name>NAD(+)</name>
        <dbReference type="ChEBI" id="CHEBI:57540"/>
    </ligand>
</feature>
<feature type="strand" evidence="3">
    <location>
        <begin position="11"/>
        <end position="13"/>
    </location>
</feature>
<feature type="helix" evidence="2">
    <location>
        <begin position="15"/>
        <end position="17"/>
    </location>
</feature>
<feature type="helix" evidence="2">
    <location>
        <begin position="18"/>
        <end position="29"/>
    </location>
</feature>
<feature type="helix" evidence="2">
    <location>
        <begin position="33"/>
        <end position="45"/>
    </location>
</feature>
<feature type="turn" evidence="2">
    <location>
        <begin position="47"/>
        <end position="50"/>
    </location>
</feature>
<feature type="strand" evidence="2">
    <location>
        <begin position="52"/>
        <end position="57"/>
    </location>
</feature>
<feature type="helix" evidence="2">
    <location>
        <begin position="61"/>
        <end position="72"/>
    </location>
</feature>
<feature type="strand" evidence="2">
    <location>
        <begin position="76"/>
        <end position="83"/>
    </location>
</feature>
<feature type="turn" evidence="2">
    <location>
        <begin position="84"/>
        <end position="86"/>
    </location>
</feature>
<feature type="helix" evidence="2">
    <location>
        <begin position="89"/>
        <end position="99"/>
    </location>
</feature>
<feature type="strand" evidence="3">
    <location>
        <begin position="103"/>
        <end position="105"/>
    </location>
</feature>
<feature type="helix" evidence="2">
    <location>
        <begin position="111"/>
        <end position="123"/>
    </location>
</feature>
<feature type="strand" evidence="2">
    <location>
        <begin position="127"/>
        <end position="134"/>
    </location>
</feature>
<feature type="helix" evidence="2">
    <location>
        <begin position="135"/>
        <end position="143"/>
    </location>
</feature>
<feature type="helix" evidence="2">
    <location>
        <begin position="145"/>
        <end position="150"/>
    </location>
</feature>
<feature type="strand" evidence="2">
    <location>
        <begin position="152"/>
        <end position="156"/>
    </location>
</feature>
<feature type="helix" evidence="2">
    <location>
        <begin position="159"/>
        <end position="170"/>
    </location>
</feature>
<feature type="strand" evidence="2">
    <location>
        <begin position="176"/>
        <end position="180"/>
    </location>
</feature>
<feature type="helix" evidence="2">
    <location>
        <begin position="185"/>
        <end position="188"/>
    </location>
</feature>
<feature type="turn" evidence="2">
    <location>
        <begin position="189"/>
        <end position="193"/>
    </location>
</feature>
<feature type="helix" evidence="2">
    <location>
        <begin position="194"/>
        <end position="208"/>
    </location>
</feature>
<feature type="strand" evidence="2">
    <location>
        <begin position="216"/>
        <end position="220"/>
    </location>
</feature>
<feature type="helix" evidence="2">
    <location>
        <begin position="224"/>
        <end position="235"/>
    </location>
</feature>
<feature type="strand" evidence="2">
    <location>
        <begin position="239"/>
        <end position="243"/>
    </location>
</feature>
<feature type="helix" evidence="2">
    <location>
        <begin position="247"/>
        <end position="255"/>
    </location>
</feature>
<feature type="helix" evidence="2">
    <location>
        <begin position="263"/>
        <end position="267"/>
    </location>
</feature>
<feature type="strand" evidence="2">
    <location>
        <begin position="271"/>
        <end position="275"/>
    </location>
</feature>
<feature type="strand" evidence="2">
    <location>
        <begin position="277"/>
        <end position="280"/>
    </location>
</feature>
<feature type="helix" evidence="2">
    <location>
        <begin position="285"/>
        <end position="288"/>
    </location>
</feature>
<feature type="strand" evidence="2">
    <location>
        <begin position="295"/>
        <end position="299"/>
    </location>
</feature>
<feature type="strand" evidence="2">
    <location>
        <begin position="301"/>
        <end position="303"/>
    </location>
</feature>
<feature type="helix" evidence="2">
    <location>
        <begin position="304"/>
        <end position="306"/>
    </location>
</feature>
<feature type="helix" evidence="2">
    <location>
        <begin position="309"/>
        <end position="315"/>
    </location>
</feature>
<feature type="strand" evidence="2">
    <location>
        <begin position="317"/>
        <end position="323"/>
    </location>
</feature>
<feature type="strand" evidence="2">
    <location>
        <begin position="326"/>
        <end position="330"/>
    </location>
</feature>
<feature type="strand" evidence="2">
    <location>
        <begin position="336"/>
        <end position="340"/>
    </location>
</feature>
<feature type="helix" evidence="2">
    <location>
        <begin position="341"/>
        <end position="343"/>
    </location>
</feature>
<feature type="helix" evidence="2">
    <location>
        <begin position="346"/>
        <end position="350"/>
    </location>
</feature>
<feature type="helix" evidence="2">
    <location>
        <begin position="356"/>
        <end position="375"/>
    </location>
</feature>
<feature type="turn" evidence="2">
    <location>
        <begin position="376"/>
        <end position="378"/>
    </location>
</feature>
<feature type="strand" evidence="2">
    <location>
        <begin position="382"/>
        <end position="386"/>
    </location>
</feature>
<feature type="helix" evidence="2">
    <location>
        <begin position="389"/>
        <end position="402"/>
    </location>
</feature>
<feature type="helix" evidence="2">
    <location>
        <begin position="412"/>
        <end position="419"/>
    </location>
</feature>
<reference key="1">
    <citation type="journal article" date="1996" name="DNA Res.">
        <title>Sequence analysis of the genome of the unicellular cyanobacterium Synechocystis sp. strain PCC6803. II. Sequence determination of the entire genome and assignment of potential protein-coding regions.</title>
        <authorList>
            <person name="Kaneko T."/>
            <person name="Sato S."/>
            <person name="Kotani H."/>
            <person name="Tanaka A."/>
            <person name="Asamizu E."/>
            <person name="Nakamura Y."/>
            <person name="Miyajima N."/>
            <person name="Hirosawa M."/>
            <person name="Sugiura M."/>
            <person name="Sasamoto S."/>
            <person name="Kimura T."/>
            <person name="Hosouchi T."/>
            <person name="Matsuno A."/>
            <person name="Muraki A."/>
            <person name="Nakazaki N."/>
            <person name="Naruo K."/>
            <person name="Okumura S."/>
            <person name="Shimpo S."/>
            <person name="Takeuchi C."/>
            <person name="Wada T."/>
            <person name="Watanabe A."/>
            <person name="Yamada M."/>
            <person name="Yasuda M."/>
            <person name="Tabata S."/>
        </authorList>
    </citation>
    <scope>NUCLEOTIDE SEQUENCE [LARGE SCALE GENOMIC DNA]</scope>
    <source>
        <strain>ATCC 27184 / PCC 6803 / Kazusa</strain>
    </source>
</reference>
<evidence type="ECO:0000255" key="1">
    <source>
        <dbReference type="HAMAP-Rule" id="MF_00563"/>
    </source>
</evidence>
<evidence type="ECO:0007829" key="2">
    <source>
        <dbReference type="PDB" id="7O5L"/>
    </source>
</evidence>
<evidence type="ECO:0007829" key="3">
    <source>
        <dbReference type="PDB" id="7O5M"/>
    </source>
</evidence>
<proteinExistence type="evidence at protein level"/>